<protein>
    <recommendedName>
        <fullName>Protein Rev</fullName>
    </recommendedName>
</protein>
<comment type="function">
    <text evidence="1">Escorts unspliced or incompletely spliced viral pre-mRNAs (late transcripts) out of the nucleus of infected cells. These pre-mRNAs carry a recognition sequence called Rev responsive element (RRE) located in the env gene, that is not present in fully spliced viral mRNAs (early transcripts). This function is essential since most viral proteins are translated from unspliced or partially spliced pre-mRNAs which cannot exit the nucleus by the pathway used by fully processed cellular mRNAs (By similarity).</text>
</comment>
<comment type="subunit">
    <text evidence="1">Homomultimer; when bound to the RRE. Multimeric assembly is essential for activity (By similarity).</text>
</comment>
<comment type="subcellular location">
    <subcellularLocation>
        <location evidence="4">Host nucleus</location>
        <location evidence="4">Host nucleolus</location>
    </subcellularLocation>
    <subcellularLocation>
        <location evidence="4">Host cytoplasm</location>
    </subcellularLocation>
    <text evidence="5">The presence of both nuclear import and nuclear export signals leads to continuous shuttling between the nucleus and cytoplasm.</text>
</comment>
<comment type="domain">
    <text evidence="1">The RNA-binding motif binds to the RRE present in incompletely spliced viral pre-mRNAs. This region also contains the NLS which mediates nuclear localization. These overlapping functions prevent Rev bound to RRE from undesirable return to the nucleus. When Rev binds the RRE, the NLS becomes masked while the NES remains accessible (By similarity).</text>
</comment>
<reference key="1">
    <citation type="journal article" date="1989" name="Virology">
        <title>The open reading frame S of visna virus genome is a trans-activating gene.</title>
        <authorList>
            <person name="Gourdou I."/>
            <person name="Mazarin V."/>
            <person name="Querat G."/>
            <person name="Sauze N."/>
            <person name="Vigne R."/>
        </authorList>
    </citation>
    <scope>NUCLEOTIDE SEQUENCE [MRNA]</scope>
</reference>
<reference key="2">
    <citation type="journal article" date="1989" name="Proc. Natl. Acad. Sci. U.S.A.">
        <title>Characterization of a cDNA clone encoding the visna virus transactivating protein.</title>
        <authorList>
            <person name="Davis J.L."/>
            <person name="Clements J.E."/>
        </authorList>
    </citation>
    <scope>NUCLEOTIDE SEQUENCE [MRNA]</scope>
</reference>
<reference key="3">
    <citation type="journal article" date="1988" name="J. Virol.">
        <title>Genetic structure and function of an early transcript of visna virus.</title>
        <authorList>
            <person name="Mazarin V."/>
            <person name="Gourdou I."/>
            <person name="Querat G."/>
            <person name="Sauze N."/>
            <person name="Vigne R."/>
        </authorList>
    </citation>
    <scope>NUCLEOTIDE SEQUENCE [GENOMIC RNA]</scope>
</reference>
<reference key="4">
    <citation type="journal article" date="1994" name="Virology">
        <title>The Rev protein of visna virus is localized to the nucleus of infected cells.</title>
        <authorList>
            <person name="Schoborg R.V."/>
            <person name="Clements J.E."/>
        </authorList>
    </citation>
    <scope>SUBCELLULAR LOCATION</scope>
</reference>
<reference key="5">
    <citation type="journal article" date="1996" name="J. Virol.">
        <title>Nuclear transport of human immunodeficiency virus type 1, visna virus, and equine infectious anemia virus Rev proteins: identification of a family of transferable nuclear export signals.</title>
        <authorList>
            <person name="Meyer B.E."/>
            <person name="Meinkoth J.L."/>
            <person name="Malim M.H."/>
        </authorList>
    </citation>
    <scope>NUCLEAR EXPORT SIGNAL</scope>
</reference>
<proteinExistence type="evidence at transcript level"/>
<dbReference type="EMBL" id="J04359">
    <property type="status" value="NOT_ANNOTATED_CDS"/>
    <property type="molecule type" value="mRNA"/>
</dbReference>
<dbReference type="EMBL" id="M23048">
    <property type="protein sequence ID" value="AAA48363.1"/>
    <property type="molecule type" value="mRNA"/>
</dbReference>
<dbReference type="EMBL" id="M25409">
    <property type="protein sequence ID" value="AAA50348.1"/>
    <property type="molecule type" value="Genomic_RNA"/>
</dbReference>
<dbReference type="PIR" id="B32184">
    <property type="entry name" value="VKLJVS"/>
</dbReference>
<dbReference type="SMR" id="P21280"/>
<dbReference type="GO" id="GO:0030430">
    <property type="term" value="C:host cell cytoplasm"/>
    <property type="evidence" value="ECO:0007669"/>
    <property type="project" value="UniProtKB-SubCell"/>
</dbReference>
<dbReference type="GO" id="GO:0044196">
    <property type="term" value="C:host cell nucleolus"/>
    <property type="evidence" value="ECO:0007669"/>
    <property type="project" value="UniProtKB-SubCell"/>
</dbReference>
<dbReference type="GO" id="GO:0003723">
    <property type="term" value="F:RNA binding"/>
    <property type="evidence" value="ECO:0007669"/>
    <property type="project" value="UniProtKB-KW"/>
</dbReference>
<dbReference type="GO" id="GO:0051028">
    <property type="term" value="P:mRNA transport"/>
    <property type="evidence" value="ECO:0007669"/>
    <property type="project" value="UniProtKB-KW"/>
</dbReference>
<dbReference type="InterPro" id="IPR016400">
    <property type="entry name" value="Rev_lentivir"/>
</dbReference>
<dbReference type="PIRSF" id="PIRSF003867">
    <property type="entry name" value="Rev_lenti-OC"/>
    <property type="match status" value="1"/>
</dbReference>
<evidence type="ECO:0000250" key="1"/>
<evidence type="ECO:0000255" key="2"/>
<evidence type="ECO:0000256" key="3">
    <source>
        <dbReference type="SAM" id="MobiDB-lite"/>
    </source>
</evidence>
<evidence type="ECO:0000269" key="4">
    <source>
    </source>
</evidence>
<evidence type="ECO:0000305" key="5"/>
<feature type="chain" id="PRO_0000085481" description="Protein Rev">
    <location>
        <begin position="1"/>
        <end position="167"/>
    </location>
</feature>
<feature type="region of interest" description="Disordered" evidence="3">
    <location>
        <begin position="1"/>
        <end position="20"/>
    </location>
</feature>
<feature type="region of interest" description="Disordered" evidence="3">
    <location>
        <begin position="33"/>
        <end position="75"/>
    </location>
</feature>
<feature type="region of interest" description="Disordered" evidence="3">
    <location>
        <begin position="142"/>
        <end position="167"/>
    </location>
</feature>
<feature type="coiled-coil region" evidence="2">
    <location>
        <begin position="21"/>
        <end position="45"/>
    </location>
</feature>
<feature type="short sequence motif" description="Nuclear localization signal and RNA-binding (RRE)" evidence="1">
    <location>
        <begin position="75"/>
        <end position="92"/>
    </location>
</feature>
<feature type="short sequence motif" description="Nuclear export signal">
    <location>
        <begin position="106"/>
        <end position="115"/>
    </location>
</feature>
<feature type="compositionally biased region" description="Polar residues" evidence="3">
    <location>
        <begin position="158"/>
        <end position="167"/>
    </location>
</feature>
<feature type="sequence conflict" description="In Ref. 2; AAA48363." evidence="5" ref="2">
    <original>W</original>
    <variation>R</variation>
    <location>
        <position position="13"/>
    </location>
</feature>
<feature type="sequence conflict" description="In Ref. 1; AAA50348." evidence="5" ref="1">
    <original>E</original>
    <variation>D</variation>
    <location>
        <position position="38"/>
    </location>
</feature>
<feature type="sequence conflict" description="In Ref. 2; AAA48363." evidence="5" ref="2">
    <original>S</original>
    <variation>T</variation>
    <location>
        <position position="66"/>
    </location>
</feature>
<feature type="sequence conflict" description="In Ref. 2; AAA48363." evidence="5" ref="2">
    <original>D</original>
    <variation>N</variation>
    <location>
        <position position="101"/>
    </location>
</feature>
<feature type="sequence conflict" description="In Ref. 1; AAA50348." evidence="5" ref="1">
    <original>E</original>
    <variation>K</variation>
    <location>
        <position position="150"/>
    </location>
</feature>
<organismHost>
    <name type="scientific">Ovis aries</name>
    <name type="common">Sheep</name>
    <dbReference type="NCBI Taxonomy" id="9940"/>
</organismHost>
<keyword id="KW-0175">Coiled coil</keyword>
<keyword id="KW-1035">Host cytoplasm</keyword>
<keyword id="KW-1048">Host nucleus</keyword>
<keyword id="KW-0509">mRNA transport</keyword>
<keyword id="KW-0694">RNA-binding</keyword>
<keyword id="KW-0813">Transport</keyword>
<accession>P21280</accession>
<sequence length="167" mass="19226">MASKESKPSRTTWRDMEPPLRETWNQVLQELVKRQQQEEEEQQGLVSGLQASKADQIYTGNSGDRSTGGIGGKTKKKRGWYKWLRKLRAREKNIPSQFYPDMESNMVGMENLTLETQLEDNALYNPATHIGDMAMDGREWMEWRESAQKEKRKGGLSGQRTNAYPGK</sequence>
<organism>
    <name type="scientific">Maedi visna virus (strain 1514)</name>
    <name type="common">MVV</name>
    <name type="synonym">Visna lentivirus</name>
    <dbReference type="NCBI Taxonomy" id="11742"/>
    <lineage>
        <taxon>Viruses</taxon>
        <taxon>Riboviria</taxon>
        <taxon>Pararnavirae</taxon>
        <taxon>Artverviricota</taxon>
        <taxon>Revtraviricetes</taxon>
        <taxon>Ortervirales</taxon>
        <taxon>Retroviridae</taxon>
        <taxon>Orthoretrovirinae</taxon>
        <taxon>Lentivirus</taxon>
        <taxon>Visna-maedi virus</taxon>
    </lineage>
</organism>
<gene>
    <name type="primary">rev</name>
    <name type="synonym">vep</name>
</gene>
<name>REV_VILV</name>